<sequence length="294" mass="29958">MKFAKGHGTENDFVLLCDPPAELRLTGAGVAALCDRRRGLGADGVLRVTAAAAAAAAGVLDRLPDGVAGDDWYMDYRNADGSVAQMCGNGVRVFAHYLRASGLETRDEFVVGSLAGPRPVTVHAADATGADVSVDMGKANTLGGGGEAFEATVGGRRFAGLAVDVGNPHLACLDPELSVDELAALDVAAPVSFDAAQFPDGVNIEVLTAPAAGVVHMRVHERGVGETRSCGTGTVAAVVAALAAAGADTGTLTVRVPGGDVVVTVTDATSYLRGPSVLVAHGEISEEWWQQAQR</sequence>
<evidence type="ECO:0000255" key="1">
    <source>
        <dbReference type="HAMAP-Rule" id="MF_00197"/>
    </source>
</evidence>
<reference key="1">
    <citation type="journal article" date="2005" name="Proc. Natl. Acad. Sci. U.S.A.">
        <title>The complete genome sequence of Mycobacterium avium subspecies paratuberculosis.</title>
        <authorList>
            <person name="Li L."/>
            <person name="Bannantine J.P."/>
            <person name="Zhang Q."/>
            <person name="Amonsin A."/>
            <person name="May B.J."/>
            <person name="Alt D."/>
            <person name="Banerji N."/>
            <person name="Kanjilal S."/>
            <person name="Kapur V."/>
        </authorList>
    </citation>
    <scope>NUCLEOTIDE SEQUENCE [LARGE SCALE GENOMIC DNA]</scope>
    <source>
        <strain>ATCC BAA-968 / K-10</strain>
    </source>
</reference>
<accession>Q73W21</accession>
<dbReference type="EC" id="5.1.1.7" evidence="1"/>
<dbReference type="EMBL" id="AE016958">
    <property type="protein sequence ID" value="AAS05157.1"/>
    <property type="molecule type" value="Genomic_DNA"/>
</dbReference>
<dbReference type="RefSeq" id="WP_003878625.1">
    <property type="nucleotide sequence ID" value="NZ_CP106873.1"/>
</dbReference>
<dbReference type="SMR" id="Q73W21"/>
<dbReference type="STRING" id="262316.MAP_2840c"/>
<dbReference type="KEGG" id="mpa:MAP_2840c"/>
<dbReference type="PATRIC" id="fig|262316.17.peg.3009"/>
<dbReference type="eggNOG" id="COG0253">
    <property type="taxonomic scope" value="Bacteria"/>
</dbReference>
<dbReference type="HOGENOM" id="CLU_053306_4_0_11"/>
<dbReference type="UniPathway" id="UPA00034">
    <property type="reaction ID" value="UER00025"/>
</dbReference>
<dbReference type="Proteomes" id="UP000000580">
    <property type="component" value="Chromosome"/>
</dbReference>
<dbReference type="GO" id="GO:0005829">
    <property type="term" value="C:cytosol"/>
    <property type="evidence" value="ECO:0007669"/>
    <property type="project" value="TreeGrafter"/>
</dbReference>
<dbReference type="GO" id="GO:0008837">
    <property type="term" value="F:diaminopimelate epimerase activity"/>
    <property type="evidence" value="ECO:0007669"/>
    <property type="project" value="UniProtKB-UniRule"/>
</dbReference>
<dbReference type="GO" id="GO:0009089">
    <property type="term" value="P:lysine biosynthetic process via diaminopimelate"/>
    <property type="evidence" value="ECO:0007669"/>
    <property type="project" value="UniProtKB-UniRule"/>
</dbReference>
<dbReference type="Gene3D" id="3.10.310.10">
    <property type="entry name" value="Diaminopimelate Epimerase, Chain A, domain 1"/>
    <property type="match status" value="2"/>
</dbReference>
<dbReference type="HAMAP" id="MF_00197">
    <property type="entry name" value="DAP_epimerase"/>
    <property type="match status" value="1"/>
</dbReference>
<dbReference type="InterPro" id="IPR018510">
    <property type="entry name" value="DAP_epimerase_AS"/>
</dbReference>
<dbReference type="InterPro" id="IPR001653">
    <property type="entry name" value="DAP_epimerase_DapF"/>
</dbReference>
<dbReference type="NCBIfam" id="TIGR00652">
    <property type="entry name" value="DapF"/>
    <property type="match status" value="1"/>
</dbReference>
<dbReference type="PANTHER" id="PTHR31689:SF0">
    <property type="entry name" value="DIAMINOPIMELATE EPIMERASE"/>
    <property type="match status" value="1"/>
</dbReference>
<dbReference type="PANTHER" id="PTHR31689">
    <property type="entry name" value="DIAMINOPIMELATE EPIMERASE, CHLOROPLASTIC"/>
    <property type="match status" value="1"/>
</dbReference>
<dbReference type="Pfam" id="PF01678">
    <property type="entry name" value="DAP_epimerase"/>
    <property type="match status" value="2"/>
</dbReference>
<dbReference type="SUPFAM" id="SSF54506">
    <property type="entry name" value="Diaminopimelate epimerase-like"/>
    <property type="match status" value="2"/>
</dbReference>
<dbReference type="PROSITE" id="PS01326">
    <property type="entry name" value="DAP_EPIMERASE"/>
    <property type="match status" value="1"/>
</dbReference>
<feature type="chain" id="PRO_1000011908" description="Diaminopimelate epimerase">
    <location>
        <begin position="1"/>
        <end position="294"/>
    </location>
</feature>
<feature type="active site" description="Proton donor" evidence="1">
    <location>
        <position position="87"/>
    </location>
</feature>
<feature type="active site" description="Proton acceptor" evidence="1">
    <location>
        <position position="230"/>
    </location>
</feature>
<feature type="binding site" evidence="1">
    <location>
        <position position="11"/>
    </location>
    <ligand>
        <name>substrate</name>
    </ligand>
</feature>
<feature type="binding site" evidence="1">
    <location>
        <position position="78"/>
    </location>
    <ligand>
        <name>substrate</name>
    </ligand>
</feature>
<feature type="binding site" evidence="1">
    <location>
        <begin position="88"/>
        <end position="89"/>
    </location>
    <ligand>
        <name>substrate</name>
    </ligand>
</feature>
<feature type="binding site" evidence="1">
    <location>
        <position position="167"/>
    </location>
    <ligand>
        <name>substrate</name>
    </ligand>
</feature>
<feature type="binding site" evidence="1">
    <location>
        <position position="203"/>
    </location>
    <ligand>
        <name>substrate</name>
    </ligand>
</feature>
<feature type="binding site" evidence="1">
    <location>
        <begin position="221"/>
        <end position="222"/>
    </location>
    <ligand>
        <name>substrate</name>
    </ligand>
</feature>
<feature type="binding site" evidence="1">
    <location>
        <begin position="231"/>
        <end position="232"/>
    </location>
    <ligand>
        <name>substrate</name>
    </ligand>
</feature>
<feature type="site" description="Could be important to modulate the pK values of the two catalytic cysteine residues" evidence="1">
    <location>
        <position position="169"/>
    </location>
</feature>
<feature type="site" description="Could be important to modulate the pK values of the two catalytic cysteine residues" evidence="1">
    <location>
        <position position="221"/>
    </location>
</feature>
<keyword id="KW-0028">Amino-acid biosynthesis</keyword>
<keyword id="KW-0963">Cytoplasm</keyword>
<keyword id="KW-0413">Isomerase</keyword>
<keyword id="KW-0457">Lysine biosynthesis</keyword>
<keyword id="KW-1185">Reference proteome</keyword>
<proteinExistence type="inferred from homology"/>
<name>DAPF_MYCPA</name>
<protein>
    <recommendedName>
        <fullName evidence="1">Diaminopimelate epimerase</fullName>
        <shortName evidence="1">DAP epimerase</shortName>
        <ecNumber evidence="1">5.1.1.7</ecNumber>
    </recommendedName>
    <alternativeName>
        <fullName evidence="1">PLP-independent amino acid racemase</fullName>
    </alternativeName>
</protein>
<organism>
    <name type="scientific">Mycolicibacterium paratuberculosis (strain ATCC BAA-968 / K-10)</name>
    <name type="common">Mycobacterium paratuberculosis</name>
    <dbReference type="NCBI Taxonomy" id="262316"/>
    <lineage>
        <taxon>Bacteria</taxon>
        <taxon>Bacillati</taxon>
        <taxon>Actinomycetota</taxon>
        <taxon>Actinomycetes</taxon>
        <taxon>Mycobacteriales</taxon>
        <taxon>Mycobacteriaceae</taxon>
        <taxon>Mycobacterium</taxon>
        <taxon>Mycobacterium avium complex (MAC)</taxon>
    </lineage>
</organism>
<comment type="function">
    <text evidence="1">Catalyzes the stereoinversion of LL-2,6-diaminopimelate (L,L-DAP) to meso-diaminopimelate (meso-DAP), a precursor of L-lysine and an essential component of the bacterial peptidoglycan.</text>
</comment>
<comment type="catalytic activity">
    <reaction evidence="1">
        <text>(2S,6S)-2,6-diaminopimelate = meso-2,6-diaminopimelate</text>
        <dbReference type="Rhea" id="RHEA:15393"/>
        <dbReference type="ChEBI" id="CHEBI:57609"/>
        <dbReference type="ChEBI" id="CHEBI:57791"/>
        <dbReference type="EC" id="5.1.1.7"/>
    </reaction>
</comment>
<comment type="pathway">
    <text evidence="1">Amino-acid biosynthesis; L-lysine biosynthesis via DAP pathway; DL-2,6-diaminopimelate from LL-2,6-diaminopimelate: step 1/1.</text>
</comment>
<comment type="subunit">
    <text evidence="1">Homodimer.</text>
</comment>
<comment type="subcellular location">
    <subcellularLocation>
        <location evidence="1">Cytoplasm</location>
    </subcellularLocation>
</comment>
<comment type="similarity">
    <text evidence="1">Belongs to the diaminopimelate epimerase family.</text>
</comment>
<gene>
    <name evidence="1" type="primary">dapF</name>
    <name type="ordered locus">MAP_2840c</name>
</gene>